<protein>
    <recommendedName>
        <fullName evidence="2">Probable transport accessory protein MmpS1</fullName>
    </recommendedName>
</protein>
<keyword id="KW-1003">Cell membrane</keyword>
<keyword id="KW-0472">Membrane</keyword>
<keyword id="KW-1185">Reference proteome</keyword>
<keyword id="KW-0812">Transmembrane</keyword>
<keyword id="KW-1133">Transmembrane helix</keyword>
<organism>
    <name type="scientific">Mycobacterium tuberculosis (strain CDC 1551 / Oshkosh)</name>
    <dbReference type="NCBI Taxonomy" id="83331"/>
    <lineage>
        <taxon>Bacteria</taxon>
        <taxon>Bacillati</taxon>
        <taxon>Actinomycetota</taxon>
        <taxon>Actinomycetes</taxon>
        <taxon>Mycobacteriales</taxon>
        <taxon>Mycobacteriaceae</taxon>
        <taxon>Mycobacterium</taxon>
        <taxon>Mycobacterium tuberculosis complex</taxon>
    </lineage>
</organism>
<gene>
    <name type="primary">mmpS1</name>
    <name type="ordered locus">MT0415</name>
</gene>
<comment type="subcellular location">
    <subcellularLocation>
        <location evidence="2">Cell membrane</location>
        <topology evidence="1">Multi-pass membrane protein</topology>
    </subcellularLocation>
</comment>
<comment type="similarity">
    <text evidence="2">Belongs to the MmpS family.</text>
</comment>
<dbReference type="EMBL" id="AE000516">
    <property type="protein sequence ID" value="AAK44639.1"/>
    <property type="molecule type" value="Genomic_DNA"/>
</dbReference>
<dbReference type="PIR" id="B70634">
    <property type="entry name" value="B70634"/>
</dbReference>
<dbReference type="RefSeq" id="WP_003900138.1">
    <property type="nucleotide sequence ID" value="NZ_KK341227.1"/>
</dbReference>
<dbReference type="SMR" id="P9WJT4"/>
<dbReference type="KEGG" id="mtc:MT0415"/>
<dbReference type="PATRIC" id="fig|83331.31.peg.445"/>
<dbReference type="HOGENOM" id="CLU_119497_0_0_11"/>
<dbReference type="Proteomes" id="UP000001020">
    <property type="component" value="Chromosome"/>
</dbReference>
<dbReference type="GO" id="GO:0005886">
    <property type="term" value="C:plasma membrane"/>
    <property type="evidence" value="ECO:0007669"/>
    <property type="project" value="UniProtKB-SubCell"/>
</dbReference>
<dbReference type="Gene3D" id="2.60.40.2880">
    <property type="entry name" value="MmpS1-5, C-terminal soluble domain"/>
    <property type="match status" value="1"/>
</dbReference>
<dbReference type="InterPro" id="IPR008693">
    <property type="entry name" value="MmpS"/>
</dbReference>
<dbReference type="InterPro" id="IPR038468">
    <property type="entry name" value="MmpS_C"/>
</dbReference>
<dbReference type="Pfam" id="PF05423">
    <property type="entry name" value="Mycobact_memb"/>
    <property type="match status" value="1"/>
</dbReference>
<name>MMPS1_MYCTO</name>
<evidence type="ECO:0000255" key="1"/>
<evidence type="ECO:0000305" key="2"/>
<reference key="1">
    <citation type="journal article" date="2002" name="J. Bacteriol.">
        <title>Whole-genome comparison of Mycobacterium tuberculosis clinical and laboratory strains.</title>
        <authorList>
            <person name="Fleischmann R.D."/>
            <person name="Alland D."/>
            <person name="Eisen J.A."/>
            <person name="Carpenter L."/>
            <person name="White O."/>
            <person name="Peterson J.D."/>
            <person name="DeBoy R.T."/>
            <person name="Dodson R.J."/>
            <person name="Gwinn M.L."/>
            <person name="Haft D.H."/>
            <person name="Hickey E.K."/>
            <person name="Kolonay J.F."/>
            <person name="Nelson W.C."/>
            <person name="Umayam L.A."/>
            <person name="Ermolaeva M.D."/>
            <person name="Salzberg S.L."/>
            <person name="Delcher A."/>
            <person name="Utterback T.R."/>
            <person name="Weidman J.F."/>
            <person name="Khouri H.M."/>
            <person name="Gill J."/>
            <person name="Mikula A."/>
            <person name="Bishai W."/>
            <person name="Jacobs W.R. Jr."/>
            <person name="Venter J.C."/>
            <person name="Fraser C.M."/>
        </authorList>
    </citation>
    <scope>NUCLEOTIDE SEQUENCE [LARGE SCALE GENOMIC DNA]</scope>
    <source>
        <strain>CDC 1551 / Oshkosh</strain>
    </source>
</reference>
<sequence>MFGVAKRFWIPMVIVIVVAVAAVTVSRLHSVFGSHQHAPDTGNLDPIIAFYPKHVLYEVFGPPGTVASINYLDADAQPHEVVNAAVPWSFTIVTTLTAVVANVVARGDGASLGCRITVNEVNRPGMSGDSSSWKGWGHVRWFIEEVPAGAA</sequence>
<feature type="chain" id="PRO_0000427774" description="Probable transport accessory protein MmpS1">
    <location>
        <begin position="1"/>
        <end position="151"/>
    </location>
</feature>
<feature type="transmembrane region" description="Helical" evidence="1">
    <location>
        <begin position="8"/>
        <end position="28"/>
    </location>
</feature>
<feature type="transmembrane region" description="Helical" evidence="1">
    <location>
        <begin position="81"/>
        <end position="101"/>
    </location>
</feature>
<accession>P9WJT4</accession>
<accession>L0T596</accession>
<accession>P0A5K0</accession>
<accession>P95212</accession>
<proteinExistence type="inferred from homology"/>